<organism>
    <name type="scientific">Trypanosoma brucei brucei</name>
    <dbReference type="NCBI Taxonomy" id="5702"/>
    <lineage>
        <taxon>Eukaryota</taxon>
        <taxon>Discoba</taxon>
        <taxon>Euglenozoa</taxon>
        <taxon>Kinetoplastea</taxon>
        <taxon>Metakinetoplastina</taxon>
        <taxon>Trypanosomatida</taxon>
        <taxon>Trypanosomatidae</taxon>
        <taxon>Trypanosoma</taxon>
    </lineage>
</organism>
<name>TCTP_TRYBB</name>
<accession>P35758</accession>
<sequence>MKIFRDILTNAEVVXDNDKPMDVLDEIVYAXQGRYIE</sequence>
<reference key="1">
    <citation type="journal article" date="1992" name="Mol. Biochem. Parasitol.">
        <title>Purification of novel calcium binding proteins from Trypanosoma brucei: properties of 22-, 24- and 38-kilodalton proteins.</title>
        <authorList>
            <person name="Haghighat N.G."/>
            <person name="Ruben L."/>
        </authorList>
    </citation>
    <scope>PROTEIN SEQUENCE</scope>
    <source>
        <strain>M110</strain>
    </source>
</reference>
<comment type="function">
    <text>Binds calcium; exact function not known.</text>
</comment>
<comment type="subunit">
    <text>Monomer.</text>
</comment>
<comment type="subcellular location">
    <subcellularLocation>
        <location>Cytoplasm</location>
    </subcellularLocation>
</comment>
<comment type="similarity">
    <text evidence="1">Belongs to the TCTP family.</text>
</comment>
<keyword id="KW-0106">Calcium</keyword>
<keyword id="KW-0963">Cytoplasm</keyword>
<keyword id="KW-0903">Direct protein sequencing</keyword>
<proteinExistence type="evidence at protein level"/>
<evidence type="ECO:0000255" key="1">
    <source>
        <dbReference type="PROSITE-ProRule" id="PRU01133"/>
    </source>
</evidence>
<dbReference type="PIR" id="A45609">
    <property type="entry name" value="A45609"/>
</dbReference>
<dbReference type="GO" id="GO:0005737">
    <property type="term" value="C:cytoplasm"/>
    <property type="evidence" value="ECO:0007669"/>
    <property type="project" value="UniProtKB-SubCell"/>
</dbReference>
<dbReference type="InterPro" id="IPR011057">
    <property type="entry name" value="Mss4-like_sf"/>
</dbReference>
<dbReference type="InterPro" id="IPR034737">
    <property type="entry name" value="TCTP"/>
</dbReference>
<dbReference type="InterPro" id="IPR018105">
    <property type="entry name" value="Translational_control_tumour_p"/>
</dbReference>
<dbReference type="Pfam" id="PF00838">
    <property type="entry name" value="TCTP"/>
    <property type="match status" value="1"/>
</dbReference>
<dbReference type="SUPFAM" id="SSF51316">
    <property type="entry name" value="Mss4-like"/>
    <property type="match status" value="1"/>
</dbReference>
<dbReference type="PROSITE" id="PS51797">
    <property type="entry name" value="TCTP_3"/>
    <property type="match status" value="1"/>
</dbReference>
<feature type="chain" id="PRO_0000211296" description="Translationally-controlled tumor protein homolog">
    <location>
        <begin position="1"/>
        <end position="37" status="greater than"/>
    </location>
</feature>
<feature type="domain" description="TCTP" evidence="1">
    <location>
        <begin position="1"/>
        <end position="37" status="greater than"/>
    </location>
</feature>
<feature type="non-terminal residue">
    <location>
        <position position="37"/>
    </location>
</feature>
<protein>
    <recommendedName>
        <fullName>Translationally-controlled tumor protein homolog</fullName>
        <shortName>TCTP</shortName>
    </recommendedName>
    <alternativeName>
        <fullName>22 kDa calcium-binding protein</fullName>
    </alternativeName>
</protein>